<organism>
    <name type="scientific">Pseudomonas putida (strain GB-1)</name>
    <dbReference type="NCBI Taxonomy" id="76869"/>
    <lineage>
        <taxon>Bacteria</taxon>
        <taxon>Pseudomonadati</taxon>
        <taxon>Pseudomonadota</taxon>
        <taxon>Gammaproteobacteria</taxon>
        <taxon>Pseudomonadales</taxon>
        <taxon>Pseudomonadaceae</taxon>
        <taxon>Pseudomonas</taxon>
    </lineage>
</organism>
<comment type="catalytic activity">
    <reaction evidence="1">
        <text>(S)-4-amino-5-oxopentanoate = 5-aminolevulinate</text>
        <dbReference type="Rhea" id="RHEA:14265"/>
        <dbReference type="ChEBI" id="CHEBI:57501"/>
        <dbReference type="ChEBI" id="CHEBI:356416"/>
        <dbReference type="EC" id="5.4.3.8"/>
    </reaction>
</comment>
<comment type="cofactor">
    <cofactor evidence="1">
        <name>pyridoxal 5'-phosphate</name>
        <dbReference type="ChEBI" id="CHEBI:597326"/>
    </cofactor>
</comment>
<comment type="pathway">
    <text evidence="1">Porphyrin-containing compound metabolism; protoporphyrin-IX biosynthesis; 5-aminolevulinate from L-glutamyl-tRNA(Glu): step 2/2.</text>
</comment>
<comment type="subunit">
    <text evidence="1">Homodimer.</text>
</comment>
<comment type="subcellular location">
    <subcellularLocation>
        <location evidence="1">Cytoplasm</location>
    </subcellularLocation>
</comment>
<comment type="similarity">
    <text evidence="1">Belongs to the class-III pyridoxal-phosphate-dependent aminotransferase family. HemL subfamily.</text>
</comment>
<reference key="1">
    <citation type="submission" date="2008-01" db="EMBL/GenBank/DDBJ databases">
        <title>Complete sequence of Pseudomonas putida GB-1.</title>
        <authorList>
            <consortium name="US DOE Joint Genome Institute"/>
            <person name="Copeland A."/>
            <person name="Lucas S."/>
            <person name="Lapidus A."/>
            <person name="Barry K."/>
            <person name="Glavina del Rio T."/>
            <person name="Dalin E."/>
            <person name="Tice H."/>
            <person name="Pitluck S."/>
            <person name="Bruce D."/>
            <person name="Goodwin L."/>
            <person name="Chertkov O."/>
            <person name="Brettin T."/>
            <person name="Detter J.C."/>
            <person name="Han C."/>
            <person name="Kuske C.R."/>
            <person name="Schmutz J."/>
            <person name="Larimer F."/>
            <person name="Land M."/>
            <person name="Hauser L."/>
            <person name="Kyrpides N."/>
            <person name="Kim E."/>
            <person name="McCarthy J.K."/>
            <person name="Richardson P."/>
        </authorList>
    </citation>
    <scope>NUCLEOTIDE SEQUENCE [LARGE SCALE GENOMIC DNA]</scope>
    <source>
        <strain>GB-1</strain>
    </source>
</reference>
<accession>B0KJV9</accession>
<dbReference type="EC" id="5.4.3.8" evidence="1"/>
<dbReference type="EMBL" id="CP000926">
    <property type="protein sequence ID" value="ABZ00723.1"/>
    <property type="molecule type" value="Genomic_DNA"/>
</dbReference>
<dbReference type="RefSeq" id="WP_012274357.1">
    <property type="nucleotide sequence ID" value="NC_010322.1"/>
</dbReference>
<dbReference type="SMR" id="B0KJV9"/>
<dbReference type="KEGG" id="ppg:PputGB1_4838"/>
<dbReference type="eggNOG" id="COG0001">
    <property type="taxonomic scope" value="Bacteria"/>
</dbReference>
<dbReference type="HOGENOM" id="CLU_016922_1_5_6"/>
<dbReference type="UniPathway" id="UPA00251">
    <property type="reaction ID" value="UER00317"/>
</dbReference>
<dbReference type="Proteomes" id="UP000002157">
    <property type="component" value="Chromosome"/>
</dbReference>
<dbReference type="GO" id="GO:0005737">
    <property type="term" value="C:cytoplasm"/>
    <property type="evidence" value="ECO:0007669"/>
    <property type="project" value="UniProtKB-SubCell"/>
</dbReference>
<dbReference type="GO" id="GO:0042286">
    <property type="term" value="F:glutamate-1-semialdehyde 2,1-aminomutase activity"/>
    <property type="evidence" value="ECO:0007669"/>
    <property type="project" value="UniProtKB-UniRule"/>
</dbReference>
<dbReference type="GO" id="GO:0030170">
    <property type="term" value="F:pyridoxal phosphate binding"/>
    <property type="evidence" value="ECO:0007669"/>
    <property type="project" value="InterPro"/>
</dbReference>
<dbReference type="GO" id="GO:0008483">
    <property type="term" value="F:transaminase activity"/>
    <property type="evidence" value="ECO:0007669"/>
    <property type="project" value="InterPro"/>
</dbReference>
<dbReference type="GO" id="GO:0006782">
    <property type="term" value="P:protoporphyrinogen IX biosynthetic process"/>
    <property type="evidence" value="ECO:0007669"/>
    <property type="project" value="UniProtKB-UniRule"/>
</dbReference>
<dbReference type="CDD" id="cd00610">
    <property type="entry name" value="OAT_like"/>
    <property type="match status" value="1"/>
</dbReference>
<dbReference type="FunFam" id="3.40.640.10:FF:000021">
    <property type="entry name" value="Glutamate-1-semialdehyde 2,1-aminomutase"/>
    <property type="match status" value="1"/>
</dbReference>
<dbReference type="Gene3D" id="3.90.1150.10">
    <property type="entry name" value="Aspartate Aminotransferase, domain 1"/>
    <property type="match status" value="1"/>
</dbReference>
<dbReference type="Gene3D" id="3.40.640.10">
    <property type="entry name" value="Type I PLP-dependent aspartate aminotransferase-like (Major domain)"/>
    <property type="match status" value="1"/>
</dbReference>
<dbReference type="HAMAP" id="MF_00375">
    <property type="entry name" value="HemL_aminotrans_3"/>
    <property type="match status" value="1"/>
</dbReference>
<dbReference type="InterPro" id="IPR004639">
    <property type="entry name" value="4pyrrol_synth_GluAld_NH2Trfase"/>
</dbReference>
<dbReference type="InterPro" id="IPR005814">
    <property type="entry name" value="Aminotrans_3"/>
</dbReference>
<dbReference type="InterPro" id="IPR049704">
    <property type="entry name" value="Aminotrans_3_PPA_site"/>
</dbReference>
<dbReference type="InterPro" id="IPR015424">
    <property type="entry name" value="PyrdxlP-dep_Trfase"/>
</dbReference>
<dbReference type="InterPro" id="IPR015421">
    <property type="entry name" value="PyrdxlP-dep_Trfase_major"/>
</dbReference>
<dbReference type="InterPro" id="IPR015422">
    <property type="entry name" value="PyrdxlP-dep_Trfase_small"/>
</dbReference>
<dbReference type="NCBIfam" id="TIGR00713">
    <property type="entry name" value="hemL"/>
    <property type="match status" value="1"/>
</dbReference>
<dbReference type="NCBIfam" id="NF000818">
    <property type="entry name" value="PRK00062.1"/>
    <property type="match status" value="1"/>
</dbReference>
<dbReference type="PANTHER" id="PTHR43713">
    <property type="entry name" value="GLUTAMATE-1-SEMIALDEHYDE 2,1-AMINOMUTASE"/>
    <property type="match status" value="1"/>
</dbReference>
<dbReference type="PANTHER" id="PTHR43713:SF3">
    <property type="entry name" value="GLUTAMATE-1-SEMIALDEHYDE 2,1-AMINOMUTASE 1, CHLOROPLASTIC-RELATED"/>
    <property type="match status" value="1"/>
</dbReference>
<dbReference type="Pfam" id="PF00202">
    <property type="entry name" value="Aminotran_3"/>
    <property type="match status" value="1"/>
</dbReference>
<dbReference type="SUPFAM" id="SSF53383">
    <property type="entry name" value="PLP-dependent transferases"/>
    <property type="match status" value="1"/>
</dbReference>
<dbReference type="PROSITE" id="PS00600">
    <property type="entry name" value="AA_TRANSFER_CLASS_3"/>
    <property type="match status" value="1"/>
</dbReference>
<gene>
    <name evidence="1" type="primary">hemL</name>
    <name type="ordered locus">PputGB1_4838</name>
</gene>
<evidence type="ECO:0000255" key="1">
    <source>
        <dbReference type="HAMAP-Rule" id="MF_00375"/>
    </source>
</evidence>
<name>GSA_PSEPG</name>
<protein>
    <recommendedName>
        <fullName evidence="1">Glutamate-1-semialdehyde 2,1-aminomutase</fullName>
        <shortName evidence="1">GSA</shortName>
        <ecNumber evidence="1">5.4.3.8</ecNumber>
    </recommendedName>
    <alternativeName>
        <fullName evidence="1">Glutamate-1-semialdehyde aminotransferase</fullName>
        <shortName evidence="1">GSA-AT</shortName>
    </alternativeName>
</protein>
<sequence>MSRSEDLFAKAQKHIPGGVNSPVRAFKSVGGTPLFFKHAEGAYVVDEDDKRYVDYVGSWGPMILGHGHPDVLDSVRKQLEHGLSYGAPTAMETDMADLVCSLVPSMEMVRMVSSGTEATMSAIRLARGYTGRDAIIKFEGCYHGHSDSLLVKAGSGLLTQGVPSSAGVPADFAKHTLTLPFNDIAAVEKTLAEVSQTVACIIVEPVAGNMNCVPPAPGFLEGLREQCDKHGVVLIFDEVMTGFRVSLGGAQGHYGIKPDLSTFGKIVGGGMPVGCFGGKREIMGCIAPLGPVYQAGTLSGNPLAMAAGLTTLKLISRPGFHAELTDYTSRMLDGLQQRADAAGVPFVTTQAGAMFGLYFSGADDIVTFEDVMASDAERFKRFFHLMLDGGVYLAPSAFEAGFTSIAHGDKELQITLDAAEKAFAALK</sequence>
<proteinExistence type="inferred from homology"/>
<feature type="chain" id="PRO_1000079929" description="Glutamate-1-semialdehyde 2,1-aminomutase">
    <location>
        <begin position="1"/>
        <end position="427"/>
    </location>
</feature>
<feature type="modified residue" description="N6-(pyridoxal phosphate)lysine" evidence="1">
    <location>
        <position position="265"/>
    </location>
</feature>
<keyword id="KW-0963">Cytoplasm</keyword>
<keyword id="KW-0413">Isomerase</keyword>
<keyword id="KW-0627">Porphyrin biosynthesis</keyword>
<keyword id="KW-0663">Pyridoxal phosphate</keyword>